<feature type="chain" id="PRO_1000136235" description="L-carnitine/gamma-butyrobetaine antiporter">
    <location>
        <begin position="1"/>
        <end position="504"/>
    </location>
</feature>
<feature type="transmembrane region" description="Helical" evidence="1">
    <location>
        <begin position="10"/>
        <end position="30"/>
    </location>
</feature>
<feature type="transmembrane region" description="Helical" evidence="1">
    <location>
        <begin position="51"/>
        <end position="71"/>
    </location>
</feature>
<feature type="transmembrane region" description="Helical" evidence="1">
    <location>
        <begin position="92"/>
        <end position="112"/>
    </location>
</feature>
<feature type="transmembrane region" description="Helical" evidence="1">
    <location>
        <begin position="143"/>
        <end position="163"/>
    </location>
</feature>
<feature type="transmembrane region" description="Helical" evidence="1">
    <location>
        <begin position="195"/>
        <end position="215"/>
    </location>
</feature>
<feature type="transmembrane region" description="Helical" evidence="1">
    <location>
        <begin position="231"/>
        <end position="251"/>
    </location>
</feature>
<feature type="transmembrane region" description="Helical" evidence="1">
    <location>
        <begin position="263"/>
        <end position="283"/>
    </location>
</feature>
<feature type="transmembrane region" description="Helical" evidence="1">
    <location>
        <begin position="316"/>
        <end position="336"/>
    </location>
</feature>
<feature type="transmembrane region" description="Helical" evidence="1">
    <location>
        <begin position="347"/>
        <end position="367"/>
    </location>
</feature>
<feature type="transmembrane region" description="Helical" evidence="1">
    <location>
        <begin position="398"/>
        <end position="418"/>
    </location>
</feature>
<feature type="transmembrane region" description="Helical" evidence="1">
    <location>
        <begin position="446"/>
        <end position="466"/>
    </location>
</feature>
<feature type="transmembrane region" description="Helical" evidence="1">
    <location>
        <begin position="475"/>
        <end position="495"/>
    </location>
</feature>
<keyword id="KW-0050">Antiport</keyword>
<keyword id="KW-0997">Cell inner membrane</keyword>
<keyword id="KW-1003">Cell membrane</keyword>
<keyword id="KW-0472">Membrane</keyword>
<keyword id="KW-0812">Transmembrane</keyword>
<keyword id="KW-1133">Transmembrane helix</keyword>
<keyword id="KW-0813">Transport</keyword>
<organism>
    <name type="scientific">Escherichia coli (strain SMS-3-5 / SECEC)</name>
    <dbReference type="NCBI Taxonomy" id="439855"/>
    <lineage>
        <taxon>Bacteria</taxon>
        <taxon>Pseudomonadati</taxon>
        <taxon>Pseudomonadota</taxon>
        <taxon>Gammaproteobacteria</taxon>
        <taxon>Enterobacterales</taxon>
        <taxon>Enterobacteriaceae</taxon>
        <taxon>Escherichia</taxon>
    </lineage>
</organism>
<protein>
    <recommendedName>
        <fullName evidence="1">L-carnitine/gamma-butyrobetaine antiporter</fullName>
    </recommendedName>
</protein>
<proteinExistence type="inferred from homology"/>
<dbReference type="EMBL" id="CP000970">
    <property type="protein sequence ID" value="ACB16847.1"/>
    <property type="molecule type" value="Genomic_DNA"/>
</dbReference>
<dbReference type="RefSeq" id="WP_000787109.1">
    <property type="nucleotide sequence ID" value="NC_010498.1"/>
</dbReference>
<dbReference type="SMR" id="B1LFX3"/>
<dbReference type="KEGG" id="ecm:EcSMS35_0041"/>
<dbReference type="HOGENOM" id="CLU_010118_6_0_6"/>
<dbReference type="UniPathway" id="UPA00117"/>
<dbReference type="Proteomes" id="UP000007011">
    <property type="component" value="Chromosome"/>
</dbReference>
<dbReference type="GO" id="GO:0005886">
    <property type="term" value="C:plasma membrane"/>
    <property type="evidence" value="ECO:0007669"/>
    <property type="project" value="UniProtKB-SubCell"/>
</dbReference>
<dbReference type="GO" id="GO:0044667">
    <property type="term" value="F:(R)-carnitine:4-(trimethylammonio)butanoate antiporter activity"/>
    <property type="evidence" value="ECO:0007669"/>
    <property type="project" value="UniProtKB-UniRule"/>
</dbReference>
<dbReference type="GO" id="GO:1900751">
    <property type="term" value="P:4-(trimethylammonio)butanoate transport"/>
    <property type="evidence" value="ECO:0007669"/>
    <property type="project" value="InterPro"/>
</dbReference>
<dbReference type="GO" id="GO:0009437">
    <property type="term" value="P:carnitine metabolic process"/>
    <property type="evidence" value="ECO:0007669"/>
    <property type="project" value="UniProtKB-UniRule"/>
</dbReference>
<dbReference type="HAMAP" id="MF_01049">
    <property type="entry name" value="CaiT"/>
    <property type="match status" value="1"/>
</dbReference>
<dbReference type="InterPro" id="IPR018093">
    <property type="entry name" value="BCCT_CS"/>
</dbReference>
<dbReference type="InterPro" id="IPR000060">
    <property type="entry name" value="BCCT_transptr"/>
</dbReference>
<dbReference type="InterPro" id="IPR023449">
    <property type="entry name" value="BCCT_transptr_CaiT"/>
</dbReference>
<dbReference type="NCBIfam" id="TIGR00842">
    <property type="entry name" value="bcct"/>
    <property type="match status" value="1"/>
</dbReference>
<dbReference type="NCBIfam" id="NF002887">
    <property type="entry name" value="PRK03356.1"/>
    <property type="match status" value="1"/>
</dbReference>
<dbReference type="PANTHER" id="PTHR30047">
    <property type="entry name" value="HIGH-AFFINITY CHOLINE TRANSPORT PROTEIN-RELATED"/>
    <property type="match status" value="1"/>
</dbReference>
<dbReference type="PANTHER" id="PTHR30047:SF11">
    <property type="entry name" value="L-CARNITINE_GAMMA-BUTYROBETAINE ANTIPORTER"/>
    <property type="match status" value="1"/>
</dbReference>
<dbReference type="Pfam" id="PF02028">
    <property type="entry name" value="BCCT"/>
    <property type="match status" value="1"/>
</dbReference>
<dbReference type="PROSITE" id="PS01303">
    <property type="entry name" value="BCCT"/>
    <property type="match status" value="1"/>
</dbReference>
<sequence>MKNEKRKTGIEPKVFFPPLIIVGILCWLTVRDLDAANVVINAVFSYVTNVWGWAFEWYMVVMLFGWFWLVFGPYAKKRLGNEPPEFSTASWIFMMFASCTSAAVLFWGSIEIYYYISTPPFGLEPNSTGAKELGLAYSLFHWGPLPWATYSFLSVAFAYFFFVRKMEVIRPSSTLVPLVGEKHAKGLFGTIVDNFYLVALIFAMGTSLGLATPLVTECMQWLFGIPHTLQLDAIIITCWIILNAICVACGLQKGVRIASDVRSYLSFLMLGWVFIVSGASFIMNYFTDSVGMLLMYLPRMLFYTDPIAKGGFPQGWTVFYWAWWVIYAIQMSIFLARISRGRTVRELCFGMVLGLTASTWILWTVLGSNTLLLMDKNIINIPNLIEQYGVARAIIETWAALPLSTATMWGFFILCFIATVTLVNACSYTLAMSTCREVRDGEEPPLLVRIGWSILVGIIGIVLLALGGLKPIQTAIIAGGCPLFFVNIMVTLSFIKDAKQNWKD</sequence>
<evidence type="ECO:0000255" key="1">
    <source>
        <dbReference type="HAMAP-Rule" id="MF_01049"/>
    </source>
</evidence>
<gene>
    <name evidence="1" type="primary">caiT</name>
    <name type="ordered locus">EcSMS35_0041</name>
</gene>
<name>CAIT_ECOSM</name>
<comment type="function">
    <text evidence="1">Catalyzes the exchange of L-carnitine for gamma-butyrobetaine.</text>
</comment>
<comment type="catalytic activity">
    <reaction evidence="1">
        <text>4-(trimethylamino)butanoate(in) + (R)-carnitine(out) = 4-(trimethylamino)butanoate(out) + (R)-carnitine(in)</text>
        <dbReference type="Rhea" id="RHEA:29427"/>
        <dbReference type="ChEBI" id="CHEBI:16244"/>
        <dbReference type="ChEBI" id="CHEBI:16347"/>
    </reaction>
</comment>
<comment type="pathway">
    <text evidence="1">Amine and polyamine metabolism; carnitine metabolism.</text>
</comment>
<comment type="subunit">
    <text evidence="1">Homotrimer.</text>
</comment>
<comment type="subcellular location">
    <subcellularLocation>
        <location evidence="1">Cell inner membrane</location>
        <topology evidence="1">Multi-pass membrane protein</topology>
    </subcellularLocation>
</comment>
<comment type="similarity">
    <text evidence="1">Belongs to the BCCT transporter (TC 2.A.15) family. CaiT subfamily.</text>
</comment>
<accession>B1LFX3</accession>
<reference key="1">
    <citation type="journal article" date="2008" name="J. Bacteriol.">
        <title>Insights into the environmental resistance gene pool from the genome sequence of the multidrug-resistant environmental isolate Escherichia coli SMS-3-5.</title>
        <authorList>
            <person name="Fricke W.F."/>
            <person name="Wright M.S."/>
            <person name="Lindell A.H."/>
            <person name="Harkins D.M."/>
            <person name="Baker-Austin C."/>
            <person name="Ravel J."/>
            <person name="Stepanauskas R."/>
        </authorList>
    </citation>
    <scope>NUCLEOTIDE SEQUENCE [LARGE SCALE GENOMIC DNA]</scope>
    <source>
        <strain>SMS-3-5 / SECEC</strain>
    </source>
</reference>